<gene>
    <name type="primary">pdxK</name>
    <name type="ordered locus">SE_0349</name>
</gene>
<protein>
    <recommendedName>
        <fullName>Putative pyridoxine kinase</fullName>
        <ecNumber>2.7.1.35</ecNumber>
    </recommendedName>
    <alternativeName>
        <fullName>PN/PL/PM kinase</fullName>
    </alternativeName>
    <alternativeName>
        <fullName>Pyridoxal kinase</fullName>
    </alternativeName>
    <alternativeName>
        <fullName>Pyridoxamine kinase</fullName>
    </alternativeName>
    <alternativeName>
        <fullName>Vitamin B6 kinase</fullName>
    </alternativeName>
</protein>
<reference key="1">
    <citation type="journal article" date="2003" name="Mol. Microbiol.">
        <title>Genome-based analysis of virulence genes in a non-biofilm-forming Staphylococcus epidermidis strain (ATCC 12228).</title>
        <authorList>
            <person name="Zhang Y.-Q."/>
            <person name="Ren S.-X."/>
            <person name="Li H.-L."/>
            <person name="Wang Y.-X."/>
            <person name="Fu G."/>
            <person name="Yang J."/>
            <person name="Qin Z.-Q."/>
            <person name="Miao Y.-G."/>
            <person name="Wang W.-Y."/>
            <person name="Chen R.-S."/>
            <person name="Shen Y."/>
            <person name="Chen Z."/>
            <person name="Yuan Z.-H."/>
            <person name="Zhao G.-P."/>
            <person name="Qu D."/>
            <person name="Danchin A."/>
            <person name="Wen Y.-M."/>
        </authorList>
    </citation>
    <scope>NUCLEOTIDE SEQUENCE [LARGE SCALE GENOMIC DNA]</scope>
    <source>
        <strain>ATCC 12228 / FDA PCI 1200</strain>
    </source>
</reference>
<sequence length="276" mass="29845">MALKKVLTIAGSDTSAGAGMQADLKTFQELDVYGMVALTSIVTMDKETWSHDVTPIDMNVFEKQLETAISIGPDAIKTGMLGTQDIIKRAGDVFVESGADYFVVDPVMVCKGEDEVLNPGNTEAMIQYLLPKATVVTPNLFEAGQLSGLGKLTSIEDMKKAAQVIYDKGTPHVIIKGGKALDQDKSYDLYYDGQQFYQLTTDMFQQSYNHGAGCTFAAATTAYLANGKSPKEAIIAAKAFVASAIKNGWKMNDFVGPVDHGAYNRIEQINVEVTEV</sequence>
<name>PDXK_STAES</name>
<accession>Q8CTQ7</accession>
<organism>
    <name type="scientific">Staphylococcus epidermidis (strain ATCC 12228 / FDA PCI 1200)</name>
    <dbReference type="NCBI Taxonomy" id="176280"/>
    <lineage>
        <taxon>Bacteria</taxon>
        <taxon>Bacillati</taxon>
        <taxon>Bacillota</taxon>
        <taxon>Bacilli</taxon>
        <taxon>Bacillales</taxon>
        <taxon>Staphylococcaceae</taxon>
        <taxon>Staphylococcus</taxon>
    </lineage>
</organism>
<comment type="function">
    <text evidence="1">Phosphorylates B6 vitamers; functions in a salvage pathway. Uses pyridoxal, pyridoxine, and pyridoxamine as substrates (By similarity).</text>
</comment>
<comment type="catalytic activity">
    <reaction>
        <text>pyridoxal + ATP = pyridoxal 5'-phosphate + ADP + H(+)</text>
        <dbReference type="Rhea" id="RHEA:10224"/>
        <dbReference type="ChEBI" id="CHEBI:15378"/>
        <dbReference type="ChEBI" id="CHEBI:17310"/>
        <dbReference type="ChEBI" id="CHEBI:30616"/>
        <dbReference type="ChEBI" id="CHEBI:456216"/>
        <dbReference type="ChEBI" id="CHEBI:597326"/>
        <dbReference type="EC" id="2.7.1.35"/>
    </reaction>
</comment>
<comment type="similarity">
    <text evidence="2">Belongs to the ThiD family.</text>
</comment>
<feature type="chain" id="PRO_0000192033" description="Putative pyridoxine kinase">
    <location>
        <begin position="1"/>
        <end position="276"/>
    </location>
</feature>
<feature type="binding site" evidence="1">
    <location>
        <position position="139"/>
    </location>
    <ligand>
        <name>ATP</name>
        <dbReference type="ChEBI" id="CHEBI:30616"/>
    </ligand>
</feature>
<feature type="binding site" evidence="1">
    <location>
        <position position="142"/>
    </location>
    <ligand>
        <name>Mg(2+)</name>
        <dbReference type="ChEBI" id="CHEBI:18420"/>
    </ligand>
</feature>
<feature type="binding site" evidence="1">
    <location>
        <begin position="176"/>
        <end position="180"/>
    </location>
    <ligand>
        <name>ATP</name>
        <dbReference type="ChEBI" id="CHEBI:30616"/>
    </ligand>
</feature>
<feature type="binding site" evidence="1">
    <location>
        <position position="188"/>
    </location>
    <ligand>
        <name>ATP</name>
        <dbReference type="ChEBI" id="CHEBI:30616"/>
    </ligand>
</feature>
<feature type="binding site" evidence="1">
    <location>
        <position position="213"/>
    </location>
    <ligand>
        <name>ATP</name>
        <dbReference type="ChEBI" id="CHEBI:30616"/>
    </ligand>
</feature>
<feature type="binding site" evidence="1">
    <location>
        <position position="238"/>
    </location>
    <ligand>
        <name>ATP</name>
        <dbReference type="ChEBI" id="CHEBI:30616"/>
    </ligand>
</feature>
<keyword id="KW-0067">ATP-binding</keyword>
<keyword id="KW-0418">Kinase</keyword>
<keyword id="KW-0460">Magnesium</keyword>
<keyword id="KW-0479">Metal-binding</keyword>
<keyword id="KW-0547">Nucleotide-binding</keyword>
<keyword id="KW-0808">Transferase</keyword>
<evidence type="ECO:0000250" key="1"/>
<evidence type="ECO:0000305" key="2"/>
<dbReference type="EC" id="2.7.1.35"/>
<dbReference type="EMBL" id="AE015929">
    <property type="protein sequence ID" value="AAO03946.1"/>
    <property type="molecule type" value="Genomic_DNA"/>
</dbReference>
<dbReference type="RefSeq" id="NP_763904.1">
    <property type="nucleotide sequence ID" value="NC_004461.1"/>
</dbReference>
<dbReference type="SMR" id="Q8CTQ7"/>
<dbReference type="KEGG" id="sep:SE_0349"/>
<dbReference type="PATRIC" id="fig|176280.10.peg.323"/>
<dbReference type="eggNOG" id="COG0351">
    <property type="taxonomic scope" value="Bacteria"/>
</dbReference>
<dbReference type="HOGENOM" id="CLU_020520_0_0_9"/>
<dbReference type="OrthoDB" id="9810880at2"/>
<dbReference type="Proteomes" id="UP000001411">
    <property type="component" value="Chromosome"/>
</dbReference>
<dbReference type="GO" id="GO:0005829">
    <property type="term" value="C:cytosol"/>
    <property type="evidence" value="ECO:0007669"/>
    <property type="project" value="TreeGrafter"/>
</dbReference>
<dbReference type="GO" id="GO:0005524">
    <property type="term" value="F:ATP binding"/>
    <property type="evidence" value="ECO:0007669"/>
    <property type="project" value="UniProtKB-KW"/>
</dbReference>
<dbReference type="GO" id="GO:0008902">
    <property type="term" value="F:hydroxymethylpyrimidine kinase activity"/>
    <property type="evidence" value="ECO:0007669"/>
    <property type="project" value="TreeGrafter"/>
</dbReference>
<dbReference type="GO" id="GO:0046872">
    <property type="term" value="F:metal ion binding"/>
    <property type="evidence" value="ECO:0007669"/>
    <property type="project" value="UniProtKB-KW"/>
</dbReference>
<dbReference type="GO" id="GO:0008972">
    <property type="term" value="F:phosphomethylpyrimidine kinase activity"/>
    <property type="evidence" value="ECO:0007669"/>
    <property type="project" value="InterPro"/>
</dbReference>
<dbReference type="GO" id="GO:0008478">
    <property type="term" value="F:pyridoxal kinase activity"/>
    <property type="evidence" value="ECO:0007669"/>
    <property type="project" value="UniProtKB-EC"/>
</dbReference>
<dbReference type="GO" id="GO:0009228">
    <property type="term" value="P:thiamine biosynthetic process"/>
    <property type="evidence" value="ECO:0007669"/>
    <property type="project" value="InterPro"/>
</dbReference>
<dbReference type="CDD" id="cd01169">
    <property type="entry name" value="HMPP_kinase"/>
    <property type="match status" value="1"/>
</dbReference>
<dbReference type="FunFam" id="3.40.1190.20:FF:000003">
    <property type="entry name" value="Phosphomethylpyrimidine kinase ThiD"/>
    <property type="match status" value="1"/>
</dbReference>
<dbReference type="Gene3D" id="3.40.1190.20">
    <property type="match status" value="1"/>
</dbReference>
<dbReference type="InterPro" id="IPR004399">
    <property type="entry name" value="HMP/HMP-P_kinase_dom"/>
</dbReference>
<dbReference type="InterPro" id="IPR013749">
    <property type="entry name" value="PM/HMP-P_kinase-1"/>
</dbReference>
<dbReference type="InterPro" id="IPR029056">
    <property type="entry name" value="Ribokinase-like"/>
</dbReference>
<dbReference type="NCBIfam" id="TIGR00097">
    <property type="entry name" value="HMP-P_kinase"/>
    <property type="match status" value="1"/>
</dbReference>
<dbReference type="PANTHER" id="PTHR20858">
    <property type="entry name" value="PHOSPHOMETHYLPYRIMIDINE KINASE"/>
    <property type="match status" value="1"/>
</dbReference>
<dbReference type="PANTHER" id="PTHR20858:SF19">
    <property type="entry name" value="PYRIDOXINE KINASE"/>
    <property type="match status" value="1"/>
</dbReference>
<dbReference type="Pfam" id="PF08543">
    <property type="entry name" value="Phos_pyr_kin"/>
    <property type="match status" value="1"/>
</dbReference>
<dbReference type="SUPFAM" id="SSF53613">
    <property type="entry name" value="Ribokinase-like"/>
    <property type="match status" value="1"/>
</dbReference>
<proteinExistence type="inferred from homology"/>